<proteinExistence type="inferred from homology"/>
<reference key="1">
    <citation type="journal article" date="2002" name="Proc. Natl. Acad. Sci. U.S.A.">
        <title>Genome sequence of a serotype M3 strain of group A Streptococcus: phage-encoded toxins, the high-virulence phenotype, and clone emergence.</title>
        <authorList>
            <person name="Beres S.B."/>
            <person name="Sylva G.L."/>
            <person name="Barbian K.D."/>
            <person name="Lei B."/>
            <person name="Hoff J.S."/>
            <person name="Mammarella N.D."/>
            <person name="Liu M.-Y."/>
            <person name="Smoot J.C."/>
            <person name="Porcella S.F."/>
            <person name="Parkins L.D."/>
            <person name="Campbell D.S."/>
            <person name="Smith T.M."/>
            <person name="McCormick J.K."/>
            <person name="Leung D.Y.M."/>
            <person name="Schlievert P.M."/>
            <person name="Musser J.M."/>
        </authorList>
    </citation>
    <scope>NUCLEOTIDE SEQUENCE [LARGE SCALE GENOMIC DNA]</scope>
    <source>
        <strain>ATCC BAA-595 / MGAS315</strain>
    </source>
</reference>
<accession>P0DB60</accession>
<accession>Q877W4</accession>
<accession>Q8K5G6</accession>
<sequence length="419" mass="47842">MPIFKKTLIVLSFICLISILIYLNMYLFGTSTVGIYGVILITYLVIKLGLSFLYEPFKGNPHDYKVAAVIPSYNEDAESLLETLKSVLAQTYPLSEIYIVDDGSSNTDAIQLIEEYVNREVDICRNVIVHRSLVNKGKRHAQAWAFERSDADVFLTVDSDTYIYPNALEELLKSFNDETVYAATGHLNARNRQTNLLTRLTDIRYDNAFGVERAAQSLTGNILVCSGPLSIYRREVIIPNLERYKNQTFLGLPVSIGDDRCLTNYAIDLGRTVYQSTARCDTDVPFQLKSYLKQQNRWNKSFFRESIISVKKILSNPIVALWTIFEVVMFMMLIVAIGNLLFNQAIQLDLIKLFAFLSIIFIVALCRNVHYMVKHPASFLLSPLYGILHLFVLQPLKLYSLCTIKNTEWGTRKKVTIFK</sequence>
<comment type="function">
    <text evidence="1">Glycosaminoglycan synthesis. The hyaluronic acid capsule is involved in the pathogenicity of group A Streptococci; it may be the major virulence determinant (By similarity).</text>
</comment>
<comment type="catalytic activity">
    <reaction>
        <text>[hyaluronan](n) + UDP-N-acetyl-alpha-D-glucosamine = N-acetyl-beta-D-glucosaminyl-(1-&gt;4)-[hyaluronan](n) + UDP + H(+)</text>
        <dbReference type="Rhea" id="RHEA:20465"/>
        <dbReference type="Rhea" id="RHEA-COMP:12583"/>
        <dbReference type="Rhea" id="RHEA-COMP:12585"/>
        <dbReference type="ChEBI" id="CHEBI:15378"/>
        <dbReference type="ChEBI" id="CHEBI:57705"/>
        <dbReference type="ChEBI" id="CHEBI:58223"/>
        <dbReference type="ChEBI" id="CHEBI:132153"/>
        <dbReference type="ChEBI" id="CHEBI:132154"/>
        <dbReference type="EC" id="2.4.1.212"/>
    </reaction>
</comment>
<comment type="catalytic activity">
    <reaction>
        <text>N-acetyl-beta-D-glucosaminyl-(1-&gt;4)-[hyaluronan](n) + UDP-alpha-D-glucuronate = [hyaluronan](n+1) + UDP + H(+)</text>
        <dbReference type="Rhea" id="RHEA:12528"/>
        <dbReference type="Rhea" id="RHEA-COMP:12585"/>
        <dbReference type="Rhea" id="RHEA-COMP:12587"/>
        <dbReference type="ChEBI" id="CHEBI:15378"/>
        <dbReference type="ChEBI" id="CHEBI:58052"/>
        <dbReference type="ChEBI" id="CHEBI:58223"/>
        <dbReference type="ChEBI" id="CHEBI:132153"/>
        <dbReference type="ChEBI" id="CHEBI:132154"/>
        <dbReference type="EC" id="2.4.1.212"/>
    </reaction>
</comment>
<comment type="cofactor">
    <cofactor evidence="1">
        <name>Mg(2+)</name>
        <dbReference type="ChEBI" id="CHEBI:18420"/>
    </cofactor>
</comment>
<comment type="pathway">
    <text>Glycan biosynthesis; hyaluronan biosynthesis.</text>
</comment>
<comment type="subcellular location">
    <subcellularLocation>
        <location evidence="1">Cell membrane</location>
        <topology evidence="1">Multi-pass membrane protein</topology>
    </subcellularLocation>
</comment>
<comment type="similarity">
    <text evidence="3">Belongs to the NodC/HAS family.</text>
</comment>
<comment type="caution">
    <text evidence="3">It is uncertain whether Met-1 or Met-25 is the initiator.</text>
</comment>
<keyword id="KW-0972">Capsule biogenesis/degradation</keyword>
<keyword id="KW-1003">Cell membrane</keyword>
<keyword id="KW-0328">Glycosyltransferase</keyword>
<keyword id="KW-0472">Membrane</keyword>
<keyword id="KW-0808">Transferase</keyword>
<keyword id="KW-0812">Transmembrane</keyword>
<keyword id="KW-1133">Transmembrane helix</keyword>
<keyword id="KW-0843">Virulence</keyword>
<organism>
    <name type="scientific">Streptococcus pyogenes serotype M3 (strain ATCC BAA-595 / MGAS315)</name>
    <dbReference type="NCBI Taxonomy" id="198466"/>
    <lineage>
        <taxon>Bacteria</taxon>
        <taxon>Bacillati</taxon>
        <taxon>Bacillota</taxon>
        <taxon>Bacilli</taxon>
        <taxon>Lactobacillales</taxon>
        <taxon>Streptococcaceae</taxon>
        <taxon>Streptococcus</taxon>
    </lineage>
</organism>
<name>HASA_STRP3</name>
<dbReference type="EC" id="2.4.1.212"/>
<dbReference type="EMBL" id="AE014074">
    <property type="protein sequence ID" value="AAM80458.1"/>
    <property type="molecule type" value="Genomic_DNA"/>
</dbReference>
<dbReference type="PIR" id="A48755">
    <property type="entry name" value="A48755"/>
</dbReference>
<dbReference type="RefSeq" id="WP_011055113.1">
    <property type="nucleotide sequence ID" value="NC_004070.1"/>
</dbReference>
<dbReference type="SMR" id="P0DB60"/>
<dbReference type="CAZy" id="GT2">
    <property type="family name" value="Glycosyltransferase Family 2"/>
</dbReference>
<dbReference type="KEGG" id="spg:SpyM3_1851"/>
<dbReference type="HOGENOM" id="CLU_029695_4_0_9"/>
<dbReference type="UniPathway" id="UPA00341"/>
<dbReference type="Proteomes" id="UP000000564">
    <property type="component" value="Chromosome"/>
</dbReference>
<dbReference type="GO" id="GO:0005886">
    <property type="term" value="C:plasma membrane"/>
    <property type="evidence" value="ECO:0007669"/>
    <property type="project" value="UniProtKB-SubCell"/>
</dbReference>
<dbReference type="GO" id="GO:0050501">
    <property type="term" value="F:hyaluronan synthase activity"/>
    <property type="evidence" value="ECO:0007669"/>
    <property type="project" value="UniProtKB-EC"/>
</dbReference>
<dbReference type="GO" id="GO:0085029">
    <property type="term" value="P:extracellular matrix assembly"/>
    <property type="evidence" value="ECO:0007669"/>
    <property type="project" value="TreeGrafter"/>
</dbReference>
<dbReference type="GO" id="GO:0030213">
    <property type="term" value="P:hyaluronan biosynthetic process"/>
    <property type="evidence" value="ECO:0007669"/>
    <property type="project" value="UniProtKB-UniPathway"/>
</dbReference>
<dbReference type="CDD" id="cd06423">
    <property type="entry name" value="CESA_like"/>
    <property type="match status" value="1"/>
</dbReference>
<dbReference type="Gene3D" id="3.90.550.10">
    <property type="entry name" value="Spore Coat Polysaccharide Biosynthesis Protein SpsA, Chain A"/>
    <property type="match status" value="1"/>
</dbReference>
<dbReference type="InterPro" id="IPR001173">
    <property type="entry name" value="Glyco_trans_2-like"/>
</dbReference>
<dbReference type="InterPro" id="IPR029044">
    <property type="entry name" value="Nucleotide-diphossugar_trans"/>
</dbReference>
<dbReference type="PANTHER" id="PTHR22913">
    <property type="entry name" value="HYALURONAN SYNTHASE"/>
    <property type="match status" value="1"/>
</dbReference>
<dbReference type="PANTHER" id="PTHR22913:SF12">
    <property type="entry name" value="MANNURONAN SYNTHASE"/>
    <property type="match status" value="1"/>
</dbReference>
<dbReference type="Pfam" id="PF00535">
    <property type="entry name" value="Glycos_transf_2"/>
    <property type="match status" value="1"/>
</dbReference>
<dbReference type="SUPFAM" id="SSF53448">
    <property type="entry name" value="Nucleotide-diphospho-sugar transferases"/>
    <property type="match status" value="1"/>
</dbReference>
<feature type="chain" id="PRO_0000197166" description="Hyaluronan synthase">
    <location>
        <begin position="1"/>
        <end position="419"/>
    </location>
</feature>
<feature type="transmembrane region" description="Helical" evidence="2">
    <location>
        <begin position="8"/>
        <end position="28"/>
    </location>
</feature>
<feature type="transmembrane region" description="Helical" evidence="2">
    <location>
        <begin position="33"/>
        <end position="53"/>
    </location>
</feature>
<feature type="transmembrane region" description="Helical" evidence="2">
    <location>
        <begin position="318"/>
        <end position="338"/>
    </location>
</feature>
<feature type="transmembrane region" description="Helical" evidence="2">
    <location>
        <begin position="345"/>
        <end position="365"/>
    </location>
</feature>
<feature type="transmembrane region" description="Helical" evidence="2">
    <location>
        <begin position="376"/>
        <end position="396"/>
    </location>
</feature>
<gene>
    <name type="primary">hasA</name>
    <name type="ordered locus">SpyM3_1851</name>
</gene>
<evidence type="ECO:0000250" key="1"/>
<evidence type="ECO:0000255" key="2"/>
<evidence type="ECO:0000305" key="3"/>
<protein>
    <recommendedName>
        <fullName>Hyaluronan synthase</fullName>
        <ecNumber>2.4.1.212</ecNumber>
    </recommendedName>
    <alternativeName>
        <fullName>Hyaluronate synthase</fullName>
    </alternativeName>
    <alternativeName>
        <fullName>Hyaluronic acid synthase</fullName>
        <shortName>HA synthase</shortName>
    </alternativeName>
</protein>